<proteinExistence type="inferred from homology"/>
<sequence>MFYTETYDVIVIGGGHAGTEAALAPARMGLKTLLLTHNVDTLGQMSCNPAIGGIGKGHLVKEVDAMGGLMAHAADKAGIQFRTLNSSKGPAVRATRAQADRVLYRQAVRTALENQPNLDIFQQEATDILIEQDRVTGVSTKMGLIFRAKSVVLTAGTFLAGKIHIGLENYEGGRAGDPASVNLSYRLRDLGLRVDRLKTGTPPRIDARTINFDILAKQHGDAVLPVFSFMGSVSDHPQQIPCYITHTNEQTHEVIRNNLDRSPMYTGVIEGIGPRYCPSIEDKVMRFADRNSHQIYLEPEGLTSNEVYPNGISTSLPFDVQMGIVNSMKGLEKARIIKPGYAIEYDYFDPRDLKPTLETKAISGLFFAGQINGTTGYEEAAAQGLLAGINAGLYVQEKEAWYPRRDQSYTGVLVDDLCTLGTKEPYRVFTSRAEYRLLLREDNADIRLTPIAHELGLIDEARWARFNQKMEKIEQERQRLRSIWLHPRSEYLEEANKVLGSPLVREASGEDLLRRPEMTYDILTSLTPYKPAIEDREAVEQVEIAIKYQGYIEHQQEEIEKQKRHENTAIPANFDYSKVSGLSNEVRAKLEQHRPVSIGQASRISGITPAAISIILVNLKKQGMLKRGE</sequence>
<protein>
    <recommendedName>
        <fullName evidence="1">tRNA uridine 5-carboxymethylaminomethyl modification enzyme MnmG</fullName>
    </recommendedName>
    <alternativeName>
        <fullName evidence="1">Glucose-inhibited division protein A</fullName>
    </alternativeName>
</protein>
<organism>
    <name type="scientific">Haemophilus influenzae (strain 86-028NP)</name>
    <dbReference type="NCBI Taxonomy" id="281310"/>
    <lineage>
        <taxon>Bacteria</taxon>
        <taxon>Pseudomonadati</taxon>
        <taxon>Pseudomonadota</taxon>
        <taxon>Gammaproteobacteria</taxon>
        <taxon>Pasteurellales</taxon>
        <taxon>Pasteurellaceae</taxon>
        <taxon>Haemophilus</taxon>
    </lineage>
</organism>
<evidence type="ECO:0000255" key="1">
    <source>
        <dbReference type="HAMAP-Rule" id="MF_00129"/>
    </source>
</evidence>
<keyword id="KW-0963">Cytoplasm</keyword>
<keyword id="KW-0274">FAD</keyword>
<keyword id="KW-0285">Flavoprotein</keyword>
<keyword id="KW-0520">NAD</keyword>
<keyword id="KW-0819">tRNA processing</keyword>
<comment type="function">
    <text evidence="1">NAD-binding protein involved in the addition of a carboxymethylaminomethyl (cmnm) group at the wobble position (U34) of certain tRNAs, forming tRNA-cmnm(5)s(2)U34.</text>
</comment>
<comment type="cofactor">
    <cofactor evidence="1">
        <name>FAD</name>
        <dbReference type="ChEBI" id="CHEBI:57692"/>
    </cofactor>
</comment>
<comment type="subunit">
    <text evidence="1">Homodimer. Heterotetramer of two MnmE and two MnmG subunits.</text>
</comment>
<comment type="subcellular location">
    <subcellularLocation>
        <location evidence="1">Cytoplasm</location>
    </subcellularLocation>
</comment>
<comment type="similarity">
    <text evidence="1">Belongs to the MnmG family.</text>
</comment>
<dbReference type="EMBL" id="CP000057">
    <property type="protein sequence ID" value="AAX87658.1"/>
    <property type="molecule type" value="Genomic_DNA"/>
</dbReference>
<dbReference type="RefSeq" id="WP_011272130.1">
    <property type="nucleotide sequence ID" value="NC_007146.2"/>
</dbReference>
<dbReference type="SMR" id="Q4QMT9"/>
<dbReference type="KEGG" id="hit:NTHI0744"/>
<dbReference type="HOGENOM" id="CLU_007831_2_2_6"/>
<dbReference type="Proteomes" id="UP000002525">
    <property type="component" value="Chromosome"/>
</dbReference>
<dbReference type="GO" id="GO:0005829">
    <property type="term" value="C:cytosol"/>
    <property type="evidence" value="ECO:0007669"/>
    <property type="project" value="TreeGrafter"/>
</dbReference>
<dbReference type="GO" id="GO:0050660">
    <property type="term" value="F:flavin adenine dinucleotide binding"/>
    <property type="evidence" value="ECO:0007669"/>
    <property type="project" value="UniProtKB-UniRule"/>
</dbReference>
<dbReference type="GO" id="GO:0030488">
    <property type="term" value="P:tRNA methylation"/>
    <property type="evidence" value="ECO:0007669"/>
    <property type="project" value="TreeGrafter"/>
</dbReference>
<dbReference type="GO" id="GO:0002098">
    <property type="term" value="P:tRNA wobble uridine modification"/>
    <property type="evidence" value="ECO:0007669"/>
    <property type="project" value="InterPro"/>
</dbReference>
<dbReference type="FunFam" id="1.10.10.1800:FF:000001">
    <property type="entry name" value="tRNA uridine 5-carboxymethylaminomethyl modification enzyme MnmG"/>
    <property type="match status" value="1"/>
</dbReference>
<dbReference type="FunFam" id="1.10.150.570:FF:000001">
    <property type="entry name" value="tRNA uridine 5-carboxymethylaminomethyl modification enzyme MnmG"/>
    <property type="match status" value="1"/>
</dbReference>
<dbReference type="FunFam" id="3.50.50.60:FF:000002">
    <property type="entry name" value="tRNA uridine 5-carboxymethylaminomethyl modification enzyme MnmG"/>
    <property type="match status" value="1"/>
</dbReference>
<dbReference type="FunFam" id="3.50.50.60:FF:000010">
    <property type="entry name" value="tRNA uridine 5-carboxymethylaminomethyl modification enzyme MnmG"/>
    <property type="match status" value="1"/>
</dbReference>
<dbReference type="Gene3D" id="3.50.50.60">
    <property type="entry name" value="FAD/NAD(P)-binding domain"/>
    <property type="match status" value="2"/>
</dbReference>
<dbReference type="Gene3D" id="1.10.150.570">
    <property type="entry name" value="GidA associated domain, C-terminal subdomain"/>
    <property type="match status" value="1"/>
</dbReference>
<dbReference type="Gene3D" id="1.10.10.1800">
    <property type="entry name" value="tRNA uridine 5-carboxymethylaminomethyl modification enzyme MnmG/GidA"/>
    <property type="match status" value="1"/>
</dbReference>
<dbReference type="HAMAP" id="MF_00129">
    <property type="entry name" value="MnmG_GidA"/>
    <property type="match status" value="1"/>
</dbReference>
<dbReference type="InterPro" id="IPR036188">
    <property type="entry name" value="FAD/NAD-bd_sf"/>
</dbReference>
<dbReference type="InterPro" id="IPR049312">
    <property type="entry name" value="GIDA_C_N"/>
</dbReference>
<dbReference type="InterPro" id="IPR004416">
    <property type="entry name" value="MnmG"/>
</dbReference>
<dbReference type="InterPro" id="IPR002218">
    <property type="entry name" value="MnmG-rel"/>
</dbReference>
<dbReference type="InterPro" id="IPR020595">
    <property type="entry name" value="MnmG-rel_CS"/>
</dbReference>
<dbReference type="InterPro" id="IPR026904">
    <property type="entry name" value="MnmG_C"/>
</dbReference>
<dbReference type="InterPro" id="IPR047001">
    <property type="entry name" value="MnmG_C_subdom"/>
</dbReference>
<dbReference type="InterPro" id="IPR044920">
    <property type="entry name" value="MnmG_C_subdom_sf"/>
</dbReference>
<dbReference type="InterPro" id="IPR040131">
    <property type="entry name" value="MnmG_N"/>
</dbReference>
<dbReference type="NCBIfam" id="TIGR00136">
    <property type="entry name" value="mnmG_gidA"/>
    <property type="match status" value="1"/>
</dbReference>
<dbReference type="PANTHER" id="PTHR11806">
    <property type="entry name" value="GLUCOSE INHIBITED DIVISION PROTEIN A"/>
    <property type="match status" value="1"/>
</dbReference>
<dbReference type="PANTHER" id="PTHR11806:SF0">
    <property type="entry name" value="PROTEIN MTO1 HOMOLOG, MITOCHONDRIAL"/>
    <property type="match status" value="1"/>
</dbReference>
<dbReference type="Pfam" id="PF01134">
    <property type="entry name" value="GIDA"/>
    <property type="match status" value="1"/>
</dbReference>
<dbReference type="Pfam" id="PF21680">
    <property type="entry name" value="GIDA_C_1st"/>
    <property type="match status" value="1"/>
</dbReference>
<dbReference type="Pfam" id="PF13932">
    <property type="entry name" value="SAM_GIDA_C"/>
    <property type="match status" value="1"/>
</dbReference>
<dbReference type="PRINTS" id="PR00411">
    <property type="entry name" value="PNDRDTASEI"/>
</dbReference>
<dbReference type="SMART" id="SM01228">
    <property type="entry name" value="GIDA_assoc_3"/>
    <property type="match status" value="1"/>
</dbReference>
<dbReference type="SUPFAM" id="SSF51905">
    <property type="entry name" value="FAD/NAD(P)-binding domain"/>
    <property type="match status" value="1"/>
</dbReference>
<dbReference type="PROSITE" id="PS01280">
    <property type="entry name" value="GIDA_1"/>
    <property type="match status" value="1"/>
</dbReference>
<dbReference type="PROSITE" id="PS01281">
    <property type="entry name" value="GIDA_2"/>
    <property type="match status" value="1"/>
</dbReference>
<reference key="1">
    <citation type="journal article" date="2005" name="J. Bacteriol.">
        <title>Genomic sequence of an otitis media isolate of nontypeable Haemophilus influenzae: comparative study with H. influenzae serotype d, strain KW20.</title>
        <authorList>
            <person name="Harrison A."/>
            <person name="Dyer D.W."/>
            <person name="Gillaspy A."/>
            <person name="Ray W.C."/>
            <person name="Mungur R."/>
            <person name="Carson M.B."/>
            <person name="Zhong H."/>
            <person name="Gipson J."/>
            <person name="Gipson M."/>
            <person name="Johnson L.S."/>
            <person name="Lewis L."/>
            <person name="Bakaletz L.O."/>
            <person name="Munson R.S. Jr."/>
        </authorList>
    </citation>
    <scope>NUCLEOTIDE SEQUENCE [LARGE SCALE GENOMIC DNA]</scope>
    <source>
        <strain>86-028NP</strain>
    </source>
</reference>
<gene>
    <name evidence="1" type="primary">mnmG</name>
    <name evidence="1" type="synonym">gidA</name>
    <name type="ordered locus">NTHI0744</name>
</gene>
<accession>Q4QMT9</accession>
<name>MNMG_HAEI8</name>
<feature type="chain" id="PRO_0000117110" description="tRNA uridine 5-carboxymethylaminomethyl modification enzyme MnmG">
    <location>
        <begin position="1"/>
        <end position="629"/>
    </location>
</feature>
<feature type="binding site" evidence="1">
    <location>
        <begin position="13"/>
        <end position="18"/>
    </location>
    <ligand>
        <name>FAD</name>
        <dbReference type="ChEBI" id="CHEBI:57692"/>
    </ligand>
</feature>
<feature type="binding site" evidence="1">
    <location>
        <begin position="273"/>
        <end position="287"/>
    </location>
    <ligand>
        <name>NAD(+)</name>
        <dbReference type="ChEBI" id="CHEBI:57540"/>
    </ligand>
</feature>